<name>CCDC6_HUMAN</name>
<feature type="initiator methionine" description="Removed" evidence="17">
    <location>
        <position position="1"/>
    </location>
</feature>
<feature type="chain" id="PRO_0000089398" description="Coiled-coil domain-containing protein 6">
    <location>
        <begin position="2"/>
        <end position="474"/>
    </location>
</feature>
<feature type="repeat" description="1">
    <location>
        <begin position="106"/>
        <end position="134"/>
    </location>
</feature>
<feature type="repeat" description="2">
    <location>
        <begin position="135"/>
        <end position="163"/>
    </location>
</feature>
<feature type="repeat" description="3">
    <location>
        <begin position="164"/>
        <end position="192"/>
    </location>
</feature>
<feature type="repeat" description="4; approximate">
    <location>
        <begin position="193"/>
        <end position="206"/>
    </location>
</feature>
<feature type="repeat" description="5">
    <location>
        <begin position="207"/>
        <end position="235"/>
    </location>
</feature>
<feature type="region of interest" description="Disordered" evidence="3">
    <location>
        <begin position="1"/>
        <end position="47"/>
    </location>
</feature>
<feature type="region of interest" description="5 X 29 AA tandem repeats">
    <location>
        <begin position="106"/>
        <end position="235"/>
    </location>
</feature>
<feature type="region of interest" description="Disordered" evidence="3">
    <location>
        <begin position="342"/>
        <end position="369"/>
    </location>
</feature>
<feature type="region of interest" description="Disordered" evidence="3">
    <location>
        <begin position="397"/>
        <end position="474"/>
    </location>
</feature>
<feature type="coiled-coil region" evidence="2">
    <location>
        <begin position="53"/>
        <end position="237"/>
    </location>
</feature>
<feature type="coiled-coil region" evidence="2">
    <location>
        <begin position="253"/>
        <end position="332"/>
    </location>
</feature>
<feature type="short sequence motif" description="SH3-binding" evidence="2">
    <location>
        <begin position="442"/>
        <end position="451"/>
    </location>
</feature>
<feature type="compositionally biased region" description="Acidic residues" evidence="3">
    <location>
        <begin position="1"/>
        <end position="10"/>
    </location>
</feature>
<feature type="compositionally biased region" description="Low complexity" evidence="3">
    <location>
        <begin position="16"/>
        <end position="30"/>
    </location>
</feature>
<feature type="compositionally biased region" description="Gly residues" evidence="3">
    <location>
        <begin position="31"/>
        <end position="47"/>
    </location>
</feature>
<feature type="compositionally biased region" description="Low complexity" evidence="3">
    <location>
        <begin position="351"/>
        <end position="368"/>
    </location>
</feature>
<feature type="compositionally biased region" description="Pro residues" evidence="3">
    <location>
        <begin position="426"/>
        <end position="451"/>
    </location>
</feature>
<feature type="compositionally biased region" description="Low complexity" evidence="3">
    <location>
        <begin position="459"/>
        <end position="474"/>
    </location>
</feature>
<feature type="site" description="Breakpoint for translocation to form RET-CCDC6 oncogene">
    <location>
        <begin position="101"/>
        <end position="102"/>
    </location>
</feature>
<feature type="modified residue" description="N-acetylalanine" evidence="17">
    <location>
        <position position="2"/>
    </location>
</feature>
<feature type="modified residue" description="Phosphoserine" evidence="13 15 16 18 19 21">
    <location>
        <position position="52"/>
    </location>
</feature>
<feature type="modified residue" description="Phosphoserine" evidence="10 11 12 15 18 19 20 21 22">
    <location>
        <position position="240"/>
    </location>
</feature>
<feature type="modified residue" description="Phosphoserine" evidence="10 11 12 14 15 18 19 20 21 22">
    <location>
        <position position="244"/>
    </location>
</feature>
<feature type="modified residue" description="Phosphoserine" evidence="19">
    <location>
        <position position="249"/>
    </location>
</feature>
<feature type="modified residue" description="Phosphoserine" evidence="18 19 21">
    <location>
        <position position="254"/>
    </location>
</feature>
<feature type="modified residue" description="Phosphoserine" evidence="19">
    <location>
        <position position="284"/>
    </location>
</feature>
<feature type="modified residue" description="Phosphoserine" evidence="19 20 21">
    <location>
        <position position="323"/>
    </location>
</feature>
<feature type="modified residue" description="Phosphothreonine" evidence="16">
    <location>
        <position position="349"/>
    </location>
</feature>
<feature type="modified residue" description="Phosphoserine" evidence="16">
    <location>
        <position position="363"/>
    </location>
</feature>
<feature type="modified residue" description="Phosphoserine" evidence="16 18">
    <location>
        <position position="367"/>
    </location>
</feature>
<feature type="modified residue" description="Omega-N-methylarginine" evidence="1">
    <location>
        <position position="387"/>
    </location>
</feature>
<feature type="modified residue" description="Phosphoserine" evidence="21">
    <location>
        <position position="395"/>
    </location>
</feature>
<feature type="modified residue" description="Phosphoserine" evidence="21">
    <location>
        <position position="413"/>
    </location>
</feature>
<feature type="sequence variant" id="VAR_062971" description="In dbSNP:rs1053266." evidence="4 5 7 8">
    <original>P</original>
    <variation>T</variation>
    <location>
        <position position="470"/>
    </location>
</feature>
<feature type="sequence conflict" description="In Ref. 1; AAC60637." evidence="9" ref="1">
    <original>A</original>
    <variation>G</variation>
    <location>
        <position position="157"/>
    </location>
</feature>
<feature type="sequence conflict" description="In Ref. 1; AAC60637." evidence="9" ref="1">
    <original>K</original>
    <variation>T</variation>
    <location>
        <position position="228"/>
    </location>
</feature>
<protein>
    <recommendedName>
        <fullName>Coiled-coil domain-containing protein 6</fullName>
    </recommendedName>
    <alternativeName>
        <fullName>Papillary thyroid carcinoma-encoded protein</fullName>
    </alternativeName>
    <alternativeName>
        <fullName>Protein H4</fullName>
    </alternativeName>
</protein>
<dbReference type="EMBL" id="S72869">
    <property type="protein sequence ID" value="AAC60637.1"/>
    <property type="status" value="ALT_FRAME"/>
    <property type="molecule type" value="mRNA"/>
</dbReference>
<dbReference type="EMBL" id="AK292593">
    <property type="protein sequence ID" value="BAF85282.1"/>
    <property type="molecule type" value="mRNA"/>
</dbReference>
<dbReference type="EMBL" id="AC060231">
    <property type="status" value="NOT_ANNOTATED_CDS"/>
    <property type="molecule type" value="Genomic_DNA"/>
</dbReference>
<dbReference type="EMBL" id="AC023904">
    <property type="status" value="NOT_ANNOTATED_CDS"/>
    <property type="molecule type" value="Genomic_DNA"/>
</dbReference>
<dbReference type="EMBL" id="CH471083">
    <property type="protein sequence ID" value="EAW54196.1"/>
    <property type="molecule type" value="Genomic_DNA"/>
</dbReference>
<dbReference type="EMBL" id="BC036757">
    <property type="protein sequence ID" value="AAH36757.2"/>
    <property type="molecule type" value="mRNA"/>
</dbReference>
<dbReference type="EMBL" id="BC064391">
    <property type="protein sequence ID" value="AAH64391.1"/>
    <property type="molecule type" value="mRNA"/>
</dbReference>
<dbReference type="EMBL" id="M31213">
    <property type="protein sequence ID" value="AAA36524.1"/>
    <property type="status" value="ALT_TERM"/>
    <property type="molecule type" value="mRNA"/>
</dbReference>
<dbReference type="CCDS" id="CCDS7257.1"/>
<dbReference type="PIR" id="I58403">
    <property type="entry name" value="I58403"/>
</dbReference>
<dbReference type="RefSeq" id="NP_005427.2">
    <property type="nucleotide sequence ID" value="NM_005436.4"/>
</dbReference>
<dbReference type="SMR" id="Q16204"/>
<dbReference type="BioGRID" id="113725">
    <property type="interactions" value="310"/>
</dbReference>
<dbReference type="FunCoup" id="Q16204">
    <property type="interactions" value="2194"/>
</dbReference>
<dbReference type="IntAct" id="Q16204">
    <property type="interactions" value="98"/>
</dbReference>
<dbReference type="MINT" id="Q16204"/>
<dbReference type="STRING" id="9606.ENSP00000263102"/>
<dbReference type="BindingDB" id="Q16204"/>
<dbReference type="GlyCosmos" id="Q16204">
    <property type="glycosylation" value="3 sites, 1 glycan"/>
</dbReference>
<dbReference type="GlyGen" id="Q16204">
    <property type="glycosylation" value="5 sites, 1 N-linked glycan (1 site), 1 O-linked glycan (3 sites)"/>
</dbReference>
<dbReference type="iPTMnet" id="Q16204"/>
<dbReference type="PhosphoSitePlus" id="Q16204"/>
<dbReference type="BioMuta" id="CCDC6"/>
<dbReference type="DMDM" id="292494979"/>
<dbReference type="jPOST" id="Q16204"/>
<dbReference type="MassIVE" id="Q16204"/>
<dbReference type="PaxDb" id="9606-ENSP00000263102"/>
<dbReference type="PeptideAtlas" id="Q16204"/>
<dbReference type="ProteomicsDB" id="60837"/>
<dbReference type="Pumba" id="Q16204"/>
<dbReference type="Antibodypedia" id="14268">
    <property type="antibodies" value="229 antibodies from 29 providers"/>
</dbReference>
<dbReference type="DNASU" id="8030"/>
<dbReference type="Ensembl" id="ENST00000263102.7">
    <property type="protein sequence ID" value="ENSP00000263102.6"/>
    <property type="gene ID" value="ENSG00000108091.11"/>
</dbReference>
<dbReference type="GeneID" id="8030"/>
<dbReference type="KEGG" id="hsa:8030"/>
<dbReference type="MANE-Select" id="ENST00000263102.7">
    <property type="protein sequence ID" value="ENSP00000263102.6"/>
    <property type="RefSeq nucleotide sequence ID" value="NM_005436.5"/>
    <property type="RefSeq protein sequence ID" value="NP_005427.2"/>
</dbReference>
<dbReference type="UCSC" id="uc001jks.5">
    <property type="organism name" value="human"/>
</dbReference>
<dbReference type="AGR" id="HGNC:18782"/>
<dbReference type="CTD" id="8030"/>
<dbReference type="DisGeNET" id="8030"/>
<dbReference type="GeneCards" id="CCDC6"/>
<dbReference type="HGNC" id="HGNC:18782">
    <property type="gene designation" value="CCDC6"/>
</dbReference>
<dbReference type="HPA" id="ENSG00000108091">
    <property type="expression patterns" value="Low tissue specificity"/>
</dbReference>
<dbReference type="MalaCards" id="CCDC6"/>
<dbReference type="MIM" id="601985">
    <property type="type" value="gene"/>
</dbReference>
<dbReference type="neXtProt" id="NX_Q16204"/>
<dbReference type="OpenTargets" id="ENSG00000108091"/>
<dbReference type="Orphanet" id="146">
    <property type="disease" value="Differentiated thyroid carcinoma"/>
</dbReference>
<dbReference type="PharmGKB" id="PA134904022"/>
<dbReference type="VEuPathDB" id="HostDB:ENSG00000108091"/>
<dbReference type="eggNOG" id="KOG2129">
    <property type="taxonomic scope" value="Eukaryota"/>
</dbReference>
<dbReference type="GeneTree" id="ENSGT00390000013594"/>
<dbReference type="HOGENOM" id="CLU_033433_2_0_1"/>
<dbReference type="InParanoid" id="Q16204"/>
<dbReference type="OMA" id="DTQQEHN"/>
<dbReference type="OrthoDB" id="78858at2759"/>
<dbReference type="PAN-GO" id="Q16204">
    <property type="GO annotations" value="0 GO annotations based on evolutionary models"/>
</dbReference>
<dbReference type="PhylomeDB" id="Q16204"/>
<dbReference type="TreeFam" id="TF321211"/>
<dbReference type="PathwayCommons" id="Q16204"/>
<dbReference type="SignaLink" id="Q16204"/>
<dbReference type="SIGNOR" id="Q16204"/>
<dbReference type="BioGRID-ORCS" id="8030">
    <property type="hits" value="79 hits in 1162 CRISPR screens"/>
</dbReference>
<dbReference type="ChiTaRS" id="CCDC6">
    <property type="organism name" value="human"/>
</dbReference>
<dbReference type="GeneWiki" id="CCDC6"/>
<dbReference type="GenomeRNAi" id="8030"/>
<dbReference type="Pharos" id="Q16204">
    <property type="development level" value="Tbio"/>
</dbReference>
<dbReference type="PRO" id="PR:Q16204"/>
<dbReference type="Proteomes" id="UP000005640">
    <property type="component" value="Chromosome 10"/>
</dbReference>
<dbReference type="RNAct" id="Q16204">
    <property type="molecule type" value="protein"/>
</dbReference>
<dbReference type="Bgee" id="ENSG00000108091">
    <property type="expression patterns" value="Expressed in secondary oocyte and 201 other cell types or tissues"/>
</dbReference>
<dbReference type="GO" id="GO:0005856">
    <property type="term" value="C:cytoskeleton"/>
    <property type="evidence" value="ECO:0007669"/>
    <property type="project" value="UniProtKB-SubCell"/>
</dbReference>
<dbReference type="GO" id="GO:0005829">
    <property type="term" value="C:cytosol"/>
    <property type="evidence" value="ECO:0000314"/>
    <property type="project" value="HPA"/>
</dbReference>
<dbReference type="GO" id="GO:0042802">
    <property type="term" value="F:identical protein binding"/>
    <property type="evidence" value="ECO:0000353"/>
    <property type="project" value="IntAct"/>
</dbReference>
<dbReference type="GO" id="GO:0017124">
    <property type="term" value="F:SH3 domain binding"/>
    <property type="evidence" value="ECO:0007669"/>
    <property type="project" value="UniProtKB-KW"/>
</dbReference>
<dbReference type="GO" id="GO:0005200">
    <property type="term" value="F:structural constituent of cytoskeleton"/>
    <property type="evidence" value="ECO:0000304"/>
    <property type="project" value="ProtInc"/>
</dbReference>
<dbReference type="InterPro" id="IPR019152">
    <property type="entry name" value="DUF2046"/>
</dbReference>
<dbReference type="PANTHER" id="PTHR15276:SF0">
    <property type="entry name" value="COILED-COIL DOMAIN-CONTAINING PROTEIN 6"/>
    <property type="match status" value="1"/>
</dbReference>
<dbReference type="PANTHER" id="PTHR15276">
    <property type="entry name" value="H4 D10S170 PROTEIN-RELATED"/>
    <property type="match status" value="1"/>
</dbReference>
<dbReference type="Pfam" id="PF09755">
    <property type="entry name" value="DUF2046"/>
    <property type="match status" value="1"/>
</dbReference>
<evidence type="ECO:0000250" key="1">
    <source>
        <dbReference type="UniProtKB" id="D3YZP9"/>
    </source>
</evidence>
<evidence type="ECO:0000255" key="2"/>
<evidence type="ECO:0000256" key="3">
    <source>
        <dbReference type="SAM" id="MobiDB-lite"/>
    </source>
</evidence>
<evidence type="ECO:0000269" key="4">
    <source>
    </source>
</evidence>
<evidence type="ECO:0000269" key="5">
    <source>
    </source>
</evidence>
<evidence type="ECO:0000269" key="6">
    <source>
    </source>
</evidence>
<evidence type="ECO:0000269" key="7">
    <source>
    </source>
</evidence>
<evidence type="ECO:0000269" key="8">
    <source ref="4"/>
</evidence>
<evidence type="ECO:0000305" key="9"/>
<evidence type="ECO:0007744" key="10">
    <source>
    </source>
</evidence>
<evidence type="ECO:0007744" key="11">
    <source>
    </source>
</evidence>
<evidence type="ECO:0007744" key="12">
    <source>
    </source>
</evidence>
<evidence type="ECO:0007744" key="13">
    <source>
    </source>
</evidence>
<evidence type="ECO:0007744" key="14">
    <source>
    </source>
</evidence>
<evidence type="ECO:0007744" key="15">
    <source>
    </source>
</evidence>
<evidence type="ECO:0007744" key="16">
    <source>
    </source>
</evidence>
<evidence type="ECO:0007744" key="17">
    <source>
    </source>
</evidence>
<evidence type="ECO:0007744" key="18">
    <source>
    </source>
</evidence>
<evidence type="ECO:0007744" key="19">
    <source>
    </source>
</evidence>
<evidence type="ECO:0007744" key="20">
    <source>
    </source>
</evidence>
<evidence type="ECO:0007744" key="21">
    <source>
    </source>
</evidence>
<evidence type="ECO:0007744" key="22">
    <source>
    </source>
</evidence>
<reference key="1">
    <citation type="journal article" date="1994" name="Oncogene">
        <title>Cloning and characterization of H4 (D10S170), a gene involved in RET rearrangements in vivo.</title>
        <authorList>
            <person name="Grieco M."/>
            <person name="Cerrato A."/>
            <person name="Santoro M."/>
            <person name="Fusco A."/>
            <person name="Melillo R.M."/>
            <person name="Vecchio G."/>
        </authorList>
    </citation>
    <scope>NUCLEOTIDE SEQUENCE [MRNA]</scope>
    <scope>VARIANT THR-470</scope>
    <source>
        <tissue>Thyroid</tissue>
    </source>
</reference>
<reference key="2">
    <citation type="journal article" date="2004" name="Nat. Genet.">
        <title>Complete sequencing and characterization of 21,243 full-length human cDNAs.</title>
        <authorList>
            <person name="Ota T."/>
            <person name="Suzuki Y."/>
            <person name="Nishikawa T."/>
            <person name="Otsuki T."/>
            <person name="Sugiyama T."/>
            <person name="Irie R."/>
            <person name="Wakamatsu A."/>
            <person name="Hayashi K."/>
            <person name="Sato H."/>
            <person name="Nagai K."/>
            <person name="Kimura K."/>
            <person name="Makita H."/>
            <person name="Sekine M."/>
            <person name="Obayashi M."/>
            <person name="Nishi T."/>
            <person name="Shibahara T."/>
            <person name="Tanaka T."/>
            <person name="Ishii S."/>
            <person name="Yamamoto J."/>
            <person name="Saito K."/>
            <person name="Kawai Y."/>
            <person name="Isono Y."/>
            <person name="Nakamura Y."/>
            <person name="Nagahari K."/>
            <person name="Murakami K."/>
            <person name="Yasuda T."/>
            <person name="Iwayanagi T."/>
            <person name="Wagatsuma M."/>
            <person name="Shiratori A."/>
            <person name="Sudo H."/>
            <person name="Hosoiri T."/>
            <person name="Kaku Y."/>
            <person name="Kodaira H."/>
            <person name="Kondo H."/>
            <person name="Sugawara M."/>
            <person name="Takahashi M."/>
            <person name="Kanda K."/>
            <person name="Yokoi T."/>
            <person name="Furuya T."/>
            <person name="Kikkawa E."/>
            <person name="Omura Y."/>
            <person name="Abe K."/>
            <person name="Kamihara K."/>
            <person name="Katsuta N."/>
            <person name="Sato K."/>
            <person name="Tanikawa M."/>
            <person name="Yamazaki M."/>
            <person name="Ninomiya K."/>
            <person name="Ishibashi T."/>
            <person name="Yamashita H."/>
            <person name="Murakawa K."/>
            <person name="Fujimori K."/>
            <person name="Tanai H."/>
            <person name="Kimata M."/>
            <person name="Watanabe M."/>
            <person name="Hiraoka S."/>
            <person name="Chiba Y."/>
            <person name="Ishida S."/>
            <person name="Ono Y."/>
            <person name="Takiguchi S."/>
            <person name="Watanabe S."/>
            <person name="Yosida M."/>
            <person name="Hotuta T."/>
            <person name="Kusano J."/>
            <person name="Kanehori K."/>
            <person name="Takahashi-Fujii A."/>
            <person name="Hara H."/>
            <person name="Tanase T.-O."/>
            <person name="Nomura Y."/>
            <person name="Togiya S."/>
            <person name="Komai F."/>
            <person name="Hara R."/>
            <person name="Takeuchi K."/>
            <person name="Arita M."/>
            <person name="Imose N."/>
            <person name="Musashino K."/>
            <person name="Yuuki H."/>
            <person name="Oshima A."/>
            <person name="Sasaki N."/>
            <person name="Aotsuka S."/>
            <person name="Yoshikawa Y."/>
            <person name="Matsunawa H."/>
            <person name="Ichihara T."/>
            <person name="Shiohata N."/>
            <person name="Sano S."/>
            <person name="Moriya S."/>
            <person name="Momiyama H."/>
            <person name="Satoh N."/>
            <person name="Takami S."/>
            <person name="Terashima Y."/>
            <person name="Suzuki O."/>
            <person name="Nakagawa S."/>
            <person name="Senoh A."/>
            <person name="Mizoguchi H."/>
            <person name="Goto Y."/>
            <person name="Shimizu F."/>
            <person name="Wakebe H."/>
            <person name="Hishigaki H."/>
            <person name="Watanabe T."/>
            <person name="Sugiyama A."/>
            <person name="Takemoto M."/>
            <person name="Kawakami B."/>
            <person name="Yamazaki M."/>
            <person name="Watanabe K."/>
            <person name="Kumagai A."/>
            <person name="Itakura S."/>
            <person name="Fukuzumi Y."/>
            <person name="Fujimori Y."/>
            <person name="Komiyama M."/>
            <person name="Tashiro H."/>
            <person name="Tanigami A."/>
            <person name="Fujiwara T."/>
            <person name="Ono T."/>
            <person name="Yamada K."/>
            <person name="Fujii Y."/>
            <person name="Ozaki K."/>
            <person name="Hirao M."/>
            <person name="Ohmori Y."/>
            <person name="Kawabata A."/>
            <person name="Hikiji T."/>
            <person name="Kobatake N."/>
            <person name="Inagaki H."/>
            <person name="Ikema Y."/>
            <person name="Okamoto S."/>
            <person name="Okitani R."/>
            <person name="Kawakami T."/>
            <person name="Noguchi S."/>
            <person name="Itoh T."/>
            <person name="Shigeta K."/>
            <person name="Senba T."/>
            <person name="Matsumura K."/>
            <person name="Nakajima Y."/>
            <person name="Mizuno T."/>
            <person name="Morinaga M."/>
            <person name="Sasaki M."/>
            <person name="Togashi T."/>
            <person name="Oyama M."/>
            <person name="Hata H."/>
            <person name="Watanabe M."/>
            <person name="Komatsu T."/>
            <person name="Mizushima-Sugano J."/>
            <person name="Satoh T."/>
            <person name="Shirai Y."/>
            <person name="Takahashi Y."/>
            <person name="Nakagawa K."/>
            <person name="Okumura K."/>
            <person name="Nagase T."/>
            <person name="Nomura N."/>
            <person name="Kikuchi H."/>
            <person name="Masuho Y."/>
            <person name="Yamashita R."/>
            <person name="Nakai K."/>
            <person name="Yada T."/>
            <person name="Nakamura Y."/>
            <person name="Ohara O."/>
            <person name="Isogai T."/>
            <person name="Sugano S."/>
        </authorList>
    </citation>
    <scope>NUCLEOTIDE SEQUENCE [LARGE SCALE MRNA]</scope>
    <scope>VARIANT THR-470</scope>
    <source>
        <tissue>Testis</tissue>
    </source>
</reference>
<reference key="3">
    <citation type="journal article" date="2004" name="Nature">
        <title>The DNA sequence and comparative analysis of human chromosome 10.</title>
        <authorList>
            <person name="Deloukas P."/>
            <person name="Earthrowl M.E."/>
            <person name="Grafham D.V."/>
            <person name="Rubenfield M."/>
            <person name="French L."/>
            <person name="Steward C.A."/>
            <person name="Sims S.K."/>
            <person name="Jones M.C."/>
            <person name="Searle S."/>
            <person name="Scott C."/>
            <person name="Howe K."/>
            <person name="Hunt S.E."/>
            <person name="Andrews T.D."/>
            <person name="Gilbert J.G.R."/>
            <person name="Swarbreck D."/>
            <person name="Ashurst J.L."/>
            <person name="Taylor A."/>
            <person name="Battles J."/>
            <person name="Bird C.P."/>
            <person name="Ainscough R."/>
            <person name="Almeida J.P."/>
            <person name="Ashwell R.I.S."/>
            <person name="Ambrose K.D."/>
            <person name="Babbage A.K."/>
            <person name="Bagguley C.L."/>
            <person name="Bailey J."/>
            <person name="Banerjee R."/>
            <person name="Bates K."/>
            <person name="Beasley H."/>
            <person name="Bray-Allen S."/>
            <person name="Brown A.J."/>
            <person name="Brown J.Y."/>
            <person name="Burford D.C."/>
            <person name="Burrill W."/>
            <person name="Burton J."/>
            <person name="Cahill P."/>
            <person name="Camire D."/>
            <person name="Carter N.P."/>
            <person name="Chapman J.C."/>
            <person name="Clark S.Y."/>
            <person name="Clarke G."/>
            <person name="Clee C.M."/>
            <person name="Clegg S."/>
            <person name="Corby N."/>
            <person name="Coulson A."/>
            <person name="Dhami P."/>
            <person name="Dutta I."/>
            <person name="Dunn M."/>
            <person name="Faulkner L."/>
            <person name="Frankish A."/>
            <person name="Frankland J.A."/>
            <person name="Garner P."/>
            <person name="Garnett J."/>
            <person name="Gribble S."/>
            <person name="Griffiths C."/>
            <person name="Grocock R."/>
            <person name="Gustafson E."/>
            <person name="Hammond S."/>
            <person name="Harley J.L."/>
            <person name="Hart E."/>
            <person name="Heath P.D."/>
            <person name="Ho T.P."/>
            <person name="Hopkins B."/>
            <person name="Horne J."/>
            <person name="Howden P.J."/>
            <person name="Huckle E."/>
            <person name="Hynds C."/>
            <person name="Johnson C."/>
            <person name="Johnson D."/>
            <person name="Kana A."/>
            <person name="Kay M."/>
            <person name="Kimberley A.M."/>
            <person name="Kershaw J.K."/>
            <person name="Kokkinaki M."/>
            <person name="Laird G.K."/>
            <person name="Lawlor S."/>
            <person name="Lee H.M."/>
            <person name="Leongamornlert D.A."/>
            <person name="Laird G."/>
            <person name="Lloyd C."/>
            <person name="Lloyd D.M."/>
            <person name="Loveland J."/>
            <person name="Lovell J."/>
            <person name="McLaren S."/>
            <person name="McLay K.E."/>
            <person name="McMurray A."/>
            <person name="Mashreghi-Mohammadi M."/>
            <person name="Matthews L."/>
            <person name="Milne S."/>
            <person name="Nickerson T."/>
            <person name="Nguyen M."/>
            <person name="Overton-Larty E."/>
            <person name="Palmer S.A."/>
            <person name="Pearce A.V."/>
            <person name="Peck A.I."/>
            <person name="Pelan S."/>
            <person name="Phillimore B."/>
            <person name="Porter K."/>
            <person name="Rice C.M."/>
            <person name="Rogosin A."/>
            <person name="Ross M.T."/>
            <person name="Sarafidou T."/>
            <person name="Sehra H.K."/>
            <person name="Shownkeen R."/>
            <person name="Skuce C.D."/>
            <person name="Smith M."/>
            <person name="Standring L."/>
            <person name="Sycamore N."/>
            <person name="Tester J."/>
            <person name="Thorpe A."/>
            <person name="Torcasso W."/>
            <person name="Tracey A."/>
            <person name="Tromans A."/>
            <person name="Tsolas J."/>
            <person name="Wall M."/>
            <person name="Walsh J."/>
            <person name="Wang H."/>
            <person name="Weinstock K."/>
            <person name="West A.P."/>
            <person name="Willey D.L."/>
            <person name="Whitehead S.L."/>
            <person name="Wilming L."/>
            <person name="Wray P.W."/>
            <person name="Young L."/>
            <person name="Chen Y."/>
            <person name="Lovering R.C."/>
            <person name="Moschonas N.K."/>
            <person name="Siebert R."/>
            <person name="Fechtel K."/>
            <person name="Bentley D."/>
            <person name="Durbin R.M."/>
            <person name="Hubbard T."/>
            <person name="Doucette-Stamm L."/>
            <person name="Beck S."/>
            <person name="Smith D.R."/>
            <person name="Rogers J."/>
        </authorList>
    </citation>
    <scope>NUCLEOTIDE SEQUENCE [LARGE SCALE GENOMIC DNA]</scope>
</reference>
<reference key="4">
    <citation type="submission" date="2005-07" db="EMBL/GenBank/DDBJ databases">
        <authorList>
            <person name="Mural R.J."/>
            <person name="Istrail S."/>
            <person name="Sutton G.G."/>
            <person name="Florea L."/>
            <person name="Halpern A.L."/>
            <person name="Mobarry C.M."/>
            <person name="Lippert R."/>
            <person name="Walenz B."/>
            <person name="Shatkay H."/>
            <person name="Dew I."/>
            <person name="Miller J.R."/>
            <person name="Flanigan M.J."/>
            <person name="Edwards N.J."/>
            <person name="Bolanos R."/>
            <person name="Fasulo D."/>
            <person name="Halldorsson B.V."/>
            <person name="Hannenhalli S."/>
            <person name="Turner R."/>
            <person name="Yooseph S."/>
            <person name="Lu F."/>
            <person name="Nusskern D.R."/>
            <person name="Shue B.C."/>
            <person name="Zheng X.H."/>
            <person name="Zhong F."/>
            <person name="Delcher A.L."/>
            <person name="Huson D.H."/>
            <person name="Kravitz S.A."/>
            <person name="Mouchard L."/>
            <person name="Reinert K."/>
            <person name="Remington K.A."/>
            <person name="Clark A.G."/>
            <person name="Waterman M.S."/>
            <person name="Eichler E.E."/>
            <person name="Adams M.D."/>
            <person name="Hunkapiller M.W."/>
            <person name="Myers E.W."/>
            <person name="Venter J.C."/>
        </authorList>
    </citation>
    <scope>NUCLEOTIDE SEQUENCE [LARGE SCALE GENOMIC DNA]</scope>
    <scope>VARIANT THR-470</scope>
</reference>
<reference key="5">
    <citation type="journal article" date="2004" name="Genome Res.">
        <title>The status, quality, and expansion of the NIH full-length cDNA project: the Mammalian Gene Collection (MGC).</title>
        <authorList>
            <consortium name="The MGC Project Team"/>
        </authorList>
    </citation>
    <scope>NUCLEOTIDE SEQUENCE [LARGE SCALE MRNA]</scope>
    <scope>VARIANT THR-470</scope>
    <source>
        <tissue>Blood</tissue>
        <tissue>Uterus</tissue>
    </source>
</reference>
<reference key="6">
    <citation type="journal article" date="1990" name="Cell">
        <title>PTC is a novel rearranged form of the ret proto-oncogene and is frequently detected in vivo in human thyroid papillary carcinomas.</title>
        <authorList>
            <person name="Grieco M."/>
            <person name="Santoro M."/>
            <person name="Berlingieri M.T."/>
            <person name="Melillo R.M."/>
            <person name="Donghi R."/>
            <person name="Bongarzone I."/>
            <person name="Pierotti M.A."/>
            <person name="Della Porta G."/>
            <person name="Fusco A."/>
            <person name="Vecchio G."/>
        </authorList>
    </citation>
    <scope>NUCLEOTIDE SEQUENCE [MRNA] OF 1-101</scope>
    <scope>CHROMOSOMAL TRANSLOCATION WITH RET</scope>
    <source>
        <tissue>Thyroid papillary carcinoma</tissue>
    </source>
</reference>
<reference key="7">
    <citation type="journal article" date="2004" name="Anal. Chem.">
        <title>Robust phosphoproteomic profiling of tyrosine phosphorylation sites from human T cells using immobilized metal affinity chromatography and tandem mass spectrometry.</title>
        <authorList>
            <person name="Brill L.M."/>
            <person name="Salomon A.R."/>
            <person name="Ficarro S.B."/>
            <person name="Mukherji M."/>
            <person name="Stettler-Gill M."/>
            <person name="Peters E.C."/>
        </authorList>
    </citation>
    <scope>PHOSPHORYLATION [LARGE SCALE ANALYSIS] AT SER-240 AND SER-244</scope>
    <scope>IDENTIFICATION BY MASS SPECTROMETRY [LARGE SCALE ANALYSIS]</scope>
    <source>
        <tissue>Leukemic T-cell</tissue>
    </source>
</reference>
<reference key="8">
    <citation type="journal article" date="2006" name="Cell">
        <title>Global, in vivo, and site-specific phosphorylation dynamics in signaling networks.</title>
        <authorList>
            <person name="Olsen J.V."/>
            <person name="Blagoev B."/>
            <person name="Gnad F."/>
            <person name="Macek B."/>
            <person name="Kumar C."/>
            <person name="Mortensen P."/>
            <person name="Mann M."/>
        </authorList>
    </citation>
    <scope>PHOSPHORYLATION [LARGE SCALE ANALYSIS] AT SER-240 AND SER-244</scope>
    <scope>IDENTIFICATION BY MASS SPECTROMETRY [LARGE SCALE ANALYSIS]</scope>
    <source>
        <tissue>Cervix carcinoma</tissue>
    </source>
</reference>
<reference key="9">
    <citation type="journal article" date="2006" name="Nat. Biotechnol.">
        <title>A probability-based approach for high-throughput protein phosphorylation analysis and site localization.</title>
        <authorList>
            <person name="Beausoleil S.A."/>
            <person name="Villen J."/>
            <person name="Gerber S.A."/>
            <person name="Rush J."/>
            <person name="Gygi S.P."/>
        </authorList>
    </citation>
    <scope>PHOSPHORYLATION [LARGE SCALE ANALYSIS] AT SER-240 AND SER-244</scope>
    <scope>IDENTIFICATION BY MASS SPECTROMETRY [LARGE SCALE ANALYSIS]</scope>
    <source>
        <tissue>Cervix carcinoma</tissue>
    </source>
</reference>
<reference key="10">
    <citation type="journal article" date="2007" name="J. Proteome Res.">
        <title>Improved titanium dioxide enrichment of phosphopeptides from HeLa cells and high confident phosphopeptide identification by cross-validation of MS/MS and MS/MS/MS spectra.</title>
        <authorList>
            <person name="Yu L.R."/>
            <person name="Zhu Z."/>
            <person name="Chan K.C."/>
            <person name="Issaq H.J."/>
            <person name="Dimitrov D.S."/>
            <person name="Veenstra T.D."/>
        </authorList>
    </citation>
    <scope>PHOSPHORYLATION [LARGE SCALE ANALYSIS] AT SER-52</scope>
    <scope>IDENTIFICATION BY MASS SPECTROMETRY [LARGE SCALE ANALYSIS]</scope>
    <source>
        <tissue>Cervix carcinoma</tissue>
    </source>
</reference>
<reference key="11">
    <citation type="journal article" date="2008" name="J. Proteome Res.">
        <title>Combining protein-based IMAC, peptide-based IMAC, and MudPIT for efficient phosphoproteomic analysis.</title>
        <authorList>
            <person name="Cantin G.T."/>
            <person name="Yi W."/>
            <person name="Lu B."/>
            <person name="Park S.K."/>
            <person name="Xu T."/>
            <person name="Lee J.-D."/>
            <person name="Yates J.R. III"/>
        </authorList>
    </citation>
    <scope>PHOSPHORYLATION [LARGE SCALE ANALYSIS] AT SER-52; SER-240 AND SER-244</scope>
    <scope>IDENTIFICATION BY MASS SPECTROMETRY [LARGE SCALE ANALYSIS]</scope>
    <source>
        <tissue>Cervix carcinoma</tissue>
    </source>
</reference>
<reference key="12">
    <citation type="journal article" date="2008" name="J. Proteome Res.">
        <title>Phosphoproteome of resting human platelets.</title>
        <authorList>
            <person name="Zahedi R.P."/>
            <person name="Lewandrowski U."/>
            <person name="Wiesner J."/>
            <person name="Wortelkamp S."/>
            <person name="Moebius J."/>
            <person name="Schuetz C."/>
            <person name="Walter U."/>
            <person name="Gambaryan S."/>
            <person name="Sickmann A."/>
        </authorList>
    </citation>
    <scope>PHOSPHORYLATION [LARGE SCALE ANALYSIS] AT SER-244</scope>
    <scope>IDENTIFICATION BY MASS SPECTROMETRY [LARGE SCALE ANALYSIS]</scope>
    <source>
        <tissue>Platelet</tissue>
    </source>
</reference>
<reference key="13">
    <citation type="journal article" date="2008" name="Proc. Natl. Acad. Sci. U.S.A.">
        <title>A quantitative atlas of mitotic phosphorylation.</title>
        <authorList>
            <person name="Dephoure N."/>
            <person name="Zhou C."/>
            <person name="Villen J."/>
            <person name="Beausoleil S.A."/>
            <person name="Bakalarski C.E."/>
            <person name="Elledge S.J."/>
            <person name="Gygi S.P."/>
        </authorList>
    </citation>
    <scope>PHOSPHORYLATION [LARGE SCALE ANALYSIS] AT SER-52; THR-349; SER-363 AND SER-367</scope>
    <scope>IDENTIFICATION BY MASS SPECTROMETRY [LARGE SCALE ANALYSIS]</scope>
    <source>
        <tissue>Cervix carcinoma</tissue>
    </source>
</reference>
<reference key="14">
    <citation type="journal article" date="2009" name="Anal. Chem.">
        <title>Lys-N and trypsin cover complementary parts of the phosphoproteome in a refined SCX-based approach.</title>
        <authorList>
            <person name="Gauci S."/>
            <person name="Helbig A.O."/>
            <person name="Slijper M."/>
            <person name="Krijgsveld J."/>
            <person name="Heck A.J."/>
            <person name="Mohammed S."/>
        </authorList>
    </citation>
    <scope>ACETYLATION [LARGE SCALE ANALYSIS] AT ALA-2</scope>
    <scope>CLEAVAGE OF INITIATOR METHIONINE [LARGE SCALE ANALYSIS]</scope>
    <scope>IDENTIFICATION BY MASS SPECTROMETRY [LARGE SCALE ANALYSIS]</scope>
</reference>
<reference key="15">
    <citation type="journal article" date="2009" name="Sci. Signal.">
        <title>Quantitative phosphoproteomic analysis of T cell receptor signaling reveals system-wide modulation of protein-protein interactions.</title>
        <authorList>
            <person name="Mayya V."/>
            <person name="Lundgren D.H."/>
            <person name="Hwang S.-I."/>
            <person name="Rezaul K."/>
            <person name="Wu L."/>
            <person name="Eng J.K."/>
            <person name="Rodionov V."/>
            <person name="Han D.K."/>
        </authorList>
    </citation>
    <scope>PHOSPHORYLATION [LARGE SCALE ANALYSIS] AT SER-52; SER-240; SER-244; SER-254 AND SER-367</scope>
    <scope>IDENTIFICATION BY MASS SPECTROMETRY [LARGE SCALE ANALYSIS]</scope>
    <source>
        <tissue>Leukemic T-cell</tissue>
    </source>
</reference>
<reference key="16">
    <citation type="journal article" date="2010" name="Sci. Signal.">
        <title>Quantitative phosphoproteomics reveals widespread full phosphorylation site occupancy during mitosis.</title>
        <authorList>
            <person name="Olsen J.V."/>
            <person name="Vermeulen M."/>
            <person name="Santamaria A."/>
            <person name="Kumar C."/>
            <person name="Miller M.L."/>
            <person name="Jensen L.J."/>
            <person name="Gnad F."/>
            <person name="Cox J."/>
            <person name="Jensen T.S."/>
            <person name="Nigg E.A."/>
            <person name="Brunak S."/>
            <person name="Mann M."/>
        </authorList>
    </citation>
    <scope>PHOSPHORYLATION [LARGE SCALE ANALYSIS] AT SER-52; SER-240; SER-244; SER-249; SER-254; SER-284 AND SER-323</scope>
    <scope>IDENTIFICATION BY MASS SPECTROMETRY [LARGE SCALE ANALYSIS]</scope>
    <source>
        <tissue>Cervix carcinoma</tissue>
    </source>
</reference>
<reference key="17">
    <citation type="journal article" date="2011" name="BMC Syst. Biol.">
        <title>Initial characterization of the human central proteome.</title>
        <authorList>
            <person name="Burkard T.R."/>
            <person name="Planyavsky M."/>
            <person name="Kaupe I."/>
            <person name="Breitwieser F.P."/>
            <person name="Buerckstuemmer T."/>
            <person name="Bennett K.L."/>
            <person name="Superti-Furga G."/>
            <person name="Colinge J."/>
        </authorList>
    </citation>
    <scope>IDENTIFICATION BY MASS SPECTROMETRY [LARGE SCALE ANALYSIS]</scope>
</reference>
<reference key="18">
    <citation type="journal article" date="2011" name="Sci. Signal.">
        <title>System-wide temporal characterization of the proteome and phosphoproteome of human embryonic stem cell differentiation.</title>
        <authorList>
            <person name="Rigbolt K.T."/>
            <person name="Prokhorova T.A."/>
            <person name="Akimov V."/>
            <person name="Henningsen J."/>
            <person name="Johansen P.T."/>
            <person name="Kratchmarova I."/>
            <person name="Kassem M."/>
            <person name="Mann M."/>
            <person name="Olsen J.V."/>
            <person name="Blagoev B."/>
        </authorList>
    </citation>
    <scope>PHOSPHORYLATION [LARGE SCALE ANALYSIS] AT SER-240; SER-244 AND SER-323</scope>
    <scope>IDENTIFICATION BY MASS SPECTROMETRY [LARGE SCALE ANALYSIS]</scope>
</reference>
<reference key="19">
    <citation type="journal article" date="2013" name="J. Proteome Res.">
        <title>Toward a comprehensive characterization of a human cancer cell phosphoproteome.</title>
        <authorList>
            <person name="Zhou H."/>
            <person name="Di Palma S."/>
            <person name="Preisinger C."/>
            <person name="Peng M."/>
            <person name="Polat A.N."/>
            <person name="Heck A.J."/>
            <person name="Mohammed S."/>
        </authorList>
    </citation>
    <scope>PHOSPHORYLATION [LARGE SCALE ANALYSIS] AT SER-52; SER-240; SER-244; SER-254; SER-323; SER-395 AND SER-413</scope>
    <scope>IDENTIFICATION BY MASS SPECTROMETRY [LARGE SCALE ANALYSIS]</scope>
    <source>
        <tissue>Cervix carcinoma</tissue>
        <tissue>Erythroleukemia</tissue>
    </source>
</reference>
<reference key="20">
    <citation type="journal article" date="2014" name="J. Proteomics">
        <title>An enzyme assisted RP-RPLC approach for in-depth analysis of human liver phosphoproteome.</title>
        <authorList>
            <person name="Bian Y."/>
            <person name="Song C."/>
            <person name="Cheng K."/>
            <person name="Dong M."/>
            <person name="Wang F."/>
            <person name="Huang J."/>
            <person name="Sun D."/>
            <person name="Wang L."/>
            <person name="Ye M."/>
            <person name="Zou H."/>
        </authorList>
    </citation>
    <scope>PHOSPHORYLATION [LARGE SCALE ANALYSIS] AT SER-240 AND SER-244</scope>
    <scope>IDENTIFICATION BY MASS SPECTROMETRY [LARGE SCALE ANALYSIS]</scope>
    <source>
        <tissue>Liver</tissue>
    </source>
</reference>
<sequence length="474" mass="53291">MADSASESDTDGAGGNSSSSAAMQSSCSSTSGGGGGGGGGGGGGKSGGIVISPFRLEELTNRLASLQQENKVLKIELETYKLKCKALQEENRDLRKASVTIQARAEQEEEFISNTLFKKIQALQKEKETLAVNYEKEEEFLTNELSRKLMQLQHEKAELEQHLEQEQEFQVNKLMKKIKKLENDTISKQLTLEQLRREKIDLENTLEQEQEALVNRLWKRMDKLEAEKRILQEKLDQPVSAPPSPRDISMEIDSPENMMRHIRFLKNEVERLKKQLRAAQLQHSEKMAQYLEEERHMREENLRLQRKLQREMERREALCRQLSESESSLEMDDERYFNEMSAQGLRPRTVSSPIPYTPSPSSSRPISPGLSYASHTVGFTPPTSLTRAGMSYYNSPGLHVQHMGTSHGITRPSPRRSNSPDKFKRPTPPPSPNTQTPVQPPPPPPPPPMQPTVPSAATSQPTPSQHSAHPSSQP</sequence>
<accession>Q16204</accession>
<accession>Q15250</accession>
<accession>Q6GSG7</accession>
<proteinExistence type="evidence at protein level"/>
<organism>
    <name type="scientific">Homo sapiens</name>
    <name type="common">Human</name>
    <dbReference type="NCBI Taxonomy" id="9606"/>
    <lineage>
        <taxon>Eukaryota</taxon>
        <taxon>Metazoa</taxon>
        <taxon>Chordata</taxon>
        <taxon>Craniata</taxon>
        <taxon>Vertebrata</taxon>
        <taxon>Euteleostomi</taxon>
        <taxon>Mammalia</taxon>
        <taxon>Eutheria</taxon>
        <taxon>Euarchontoglires</taxon>
        <taxon>Primates</taxon>
        <taxon>Haplorrhini</taxon>
        <taxon>Catarrhini</taxon>
        <taxon>Hominidae</taxon>
        <taxon>Homo</taxon>
    </lineage>
</organism>
<comment type="interaction">
    <interactant intactId="EBI-1045350">
        <id>Q16204</id>
    </interactant>
    <interactant intactId="EBI-5661893">
        <id>Q86SG2</id>
        <label>ANKRD23</label>
    </interactant>
    <organismsDiffer>false</organismsDiffer>
    <experiments>3</experiments>
</comment>
<comment type="interaction">
    <interactant intactId="EBI-1045350">
        <id>Q16204</id>
    </interactant>
    <interactant intactId="EBI-492509">
        <id>Q9Y2D1</id>
        <label>ATF5</label>
    </interactant>
    <organismsDiffer>false</organismsDiffer>
    <experiments>3</experiments>
</comment>
<comment type="interaction">
    <interactant intactId="EBI-1045350">
        <id>Q16204</id>
    </interactant>
    <interactant intactId="EBI-1045350">
        <id>Q16204</id>
        <label>CCDC6</label>
    </interactant>
    <organismsDiffer>false</organismsDiffer>
    <experiments>3</experiments>
</comment>
<comment type="interaction">
    <interactant intactId="EBI-1045350">
        <id>Q16204</id>
    </interactant>
    <interactant intactId="EBI-2350265">
        <id>Q7L2Z9</id>
        <label>CENPQ</label>
    </interactant>
    <organismsDiffer>false</organismsDiffer>
    <experiments>5</experiments>
</comment>
<comment type="interaction">
    <interactant intactId="EBI-1045350">
        <id>Q16204</id>
    </interactant>
    <interactant intactId="EBI-11521003">
        <id>Q9UIA0</id>
        <label>CYTH4</label>
    </interactant>
    <organismsDiffer>false</organismsDiffer>
    <experiments>3</experiments>
</comment>
<comment type="interaction">
    <interactant intactId="EBI-1045350">
        <id>Q16204</id>
    </interactant>
    <interactant intactId="EBI-359574">
        <id>Q969H0</id>
        <label>FBXW7</label>
    </interactant>
    <organismsDiffer>false</organismsDiffer>
    <experiments>9</experiments>
</comment>
<comment type="interaction">
    <interactant intactId="EBI-1045350">
        <id>Q16204</id>
    </interactant>
    <interactant intactId="EBI-1052570">
        <id>O95995</id>
        <label>GAS8</label>
    </interactant>
    <organismsDiffer>false</organismsDiffer>
    <experiments>3</experiments>
</comment>
<comment type="interaction">
    <interactant intactId="EBI-1045350">
        <id>Q16204</id>
    </interactant>
    <interactant intactId="EBI-740641">
        <id>Q9NP66</id>
        <label>HMG20A</label>
    </interactant>
    <organismsDiffer>false</organismsDiffer>
    <experiments>3</experiments>
</comment>
<comment type="interaction">
    <interactant intactId="EBI-1045350">
        <id>Q16204</id>
    </interactant>
    <interactant intactId="EBI-12039345">
        <id>Q9UBR4-2</id>
        <label>LHX3</label>
    </interactant>
    <organismsDiffer>false</organismsDiffer>
    <experiments>3</experiments>
</comment>
<comment type="interaction">
    <interactant intactId="EBI-1045350">
        <id>Q16204</id>
    </interactant>
    <interactant intactId="EBI-720984">
        <id>Q6UWE0</id>
        <label>LRSAM1</label>
    </interactant>
    <organismsDiffer>false</organismsDiffer>
    <experiments>3</experiments>
</comment>
<comment type="interaction">
    <interactant intactId="EBI-1045350">
        <id>Q16204</id>
    </interactant>
    <interactant intactId="EBI-10198848">
        <id>Q9P127</id>
        <label>LUZP4</label>
    </interactant>
    <organismsDiffer>false</organismsDiffer>
    <experiments>3</experiments>
</comment>
<comment type="interaction">
    <interactant intactId="EBI-1045350">
        <id>Q16204</id>
    </interactant>
    <interactant intactId="EBI-1213983">
        <id>Q13164</id>
        <label>MAPK7</label>
    </interactant>
    <organismsDiffer>false</organismsDiffer>
    <experiments>3</experiments>
</comment>
<comment type="interaction">
    <interactant intactId="EBI-1045350">
        <id>Q16204</id>
    </interactant>
    <interactant intactId="EBI-16439278">
        <id>Q6FHY5</id>
        <label>MEOX2</label>
    </interactant>
    <organismsDiffer>false</organismsDiffer>
    <experiments>3</experiments>
</comment>
<comment type="interaction">
    <interactant intactId="EBI-1045350">
        <id>Q16204</id>
    </interactant>
    <interactant intactId="EBI-11522433">
        <id>Q5JR59-3</id>
        <label>MTUS2</label>
    </interactant>
    <organismsDiffer>false</organismsDiffer>
    <experiments>4</experiments>
</comment>
<comment type="interaction">
    <interactant intactId="EBI-1045350">
        <id>Q16204</id>
    </interactant>
    <interactant intactId="EBI-747278">
        <id>P26367</id>
        <label>PAX6</label>
    </interactant>
    <organismsDiffer>false</organismsDiffer>
    <experiments>3</experiments>
</comment>
<comment type="interaction">
    <interactant intactId="EBI-1045350">
        <id>Q16204</id>
    </interactant>
    <interactant intactId="EBI-714158">
        <id>Q13526</id>
        <label>PIN1</label>
    </interactant>
    <organismsDiffer>false</organismsDiffer>
    <experiments>6</experiments>
</comment>
<comment type="interaction">
    <interactant intactId="EBI-1045350">
        <id>Q16204</id>
    </interactant>
    <interactant intactId="EBI-749285">
        <id>Q15311</id>
        <label>RALBP1</label>
    </interactant>
    <organismsDiffer>false</organismsDiffer>
    <experiments>10</experiments>
</comment>
<comment type="interaction">
    <interactant intactId="EBI-1045350">
        <id>Q16204</id>
    </interactant>
    <interactant intactId="EBI-11915024">
        <id>Q16533</id>
        <label>SNAPC1</label>
    </interactant>
    <organismsDiffer>false</organismsDiffer>
    <experiments>3</experiments>
</comment>
<comment type="interaction">
    <interactant intactId="EBI-1045350">
        <id>Q16204</id>
    </interactant>
    <interactant intactId="EBI-741237">
        <id>O60504</id>
        <label>SORBS3</label>
    </interactant>
    <organismsDiffer>false</organismsDiffer>
    <experiments>3</experiments>
</comment>
<comment type="interaction">
    <interactant intactId="EBI-1045350">
        <id>Q16204</id>
    </interactant>
    <interactant intactId="EBI-1105213">
        <id>Q9UBB9</id>
        <label>TFIP11</label>
    </interactant>
    <organismsDiffer>false</organismsDiffer>
    <experiments>3</experiments>
</comment>
<comment type="interaction">
    <interactant intactId="EBI-1045350">
        <id>Q16204</id>
    </interactant>
    <interactant intactId="EBI-2820256">
        <id>Q14142</id>
        <label>TRIM14</label>
    </interactant>
    <organismsDiffer>false</organismsDiffer>
    <experiments>3</experiments>
</comment>
<comment type="interaction">
    <interactant intactId="EBI-1045350">
        <id>Q16204</id>
    </interactant>
    <interactant intactId="EBI-10177272">
        <id>P15622-3</id>
        <label>ZNF250</label>
    </interactant>
    <organismsDiffer>false</organismsDiffer>
    <experiments>3</experiments>
</comment>
<comment type="interaction">
    <interactant intactId="EBI-1045350">
        <id>Q16204</id>
    </interactant>
    <interactant intactId="EBI-4395669">
        <id>Q6ZNG0</id>
        <label>ZNF620</label>
    </interactant>
    <organismsDiffer>false</organismsDiffer>
    <experiments>3</experiments>
</comment>
<comment type="interaction">
    <interactant intactId="EBI-1045350">
        <id>Q16204</id>
    </interactant>
    <interactant intactId="EBI-10251462">
        <id>Q6NX45</id>
        <label>ZNF774</label>
    </interactant>
    <organismsDiffer>false</organismsDiffer>
    <experiments>3</experiments>
</comment>
<comment type="interaction">
    <interactant intactId="EBI-1045350">
        <id>Q16204</id>
    </interactant>
    <interactant intactId="EBI-5667516">
        <id>Q9Y2P0</id>
        <label>ZNF835</label>
    </interactant>
    <organismsDiffer>false</organismsDiffer>
    <experiments>3</experiments>
</comment>
<comment type="subcellular location">
    <subcellularLocation>
        <location>Cytoplasm</location>
    </subcellularLocation>
    <subcellularLocation>
        <location evidence="9">Cytoplasm</location>
        <location evidence="9">Cytoskeleton</location>
    </subcellularLocation>
    <text>May be a cytoskeletal protein.</text>
</comment>
<comment type="tissue specificity">
    <text>Ubiquitously expressed.</text>
</comment>
<comment type="domain">
    <text>The protein has mostly an alpha helical conformation similar to myosin heavy-chain tail that might adopt a coiled-coil conformation.</text>
</comment>
<comment type="disease">
    <text evidence="6">A chromosomal aberration involving CCDC6 is found in papillary thyroid carcinomas (PTCs). Inversion inv(10)(q11.2;q21) generates the RET/CCDC6 (PTC1) oncogene.</text>
</comment>
<comment type="sequence caution" evidence="9">
    <conflict type="frameshift">
        <sequence resource="EMBL-CDS" id="AAC60637"/>
    </conflict>
</comment>
<comment type="online information" name="Atlas of Genetics and Cytogenetics in Oncology and Haematology">
    <link uri="https://atlasgeneticsoncology.org/gene/280/H4"/>
</comment>
<keyword id="KW-0007">Acetylation</keyword>
<keyword id="KW-0160">Chromosomal rearrangement</keyword>
<keyword id="KW-0175">Coiled coil</keyword>
<keyword id="KW-0963">Cytoplasm</keyword>
<keyword id="KW-0206">Cytoskeleton</keyword>
<keyword id="KW-0488">Methylation</keyword>
<keyword id="KW-0597">Phosphoprotein</keyword>
<keyword id="KW-1267">Proteomics identification</keyword>
<keyword id="KW-0656">Proto-oncogene</keyword>
<keyword id="KW-1185">Reference proteome</keyword>
<keyword id="KW-0677">Repeat</keyword>
<keyword id="KW-0729">SH3-binding</keyword>
<gene>
    <name type="primary">CCDC6</name>
    <name type="synonym">D10S170</name>
    <name type="synonym">TST1</name>
</gene>